<comment type="function">
    <text evidence="1">NDH-1 shuttles electrons from NADH, via FMN and iron-sulfur (Fe-S) centers, to quinones in the respiratory chain. The immediate electron acceptor for the enzyme in this species is believed to be a menaquinone. Couples the redox reaction to proton translocation (for every two electrons transferred, four hydrogen ions are translocated across the cytoplasmic membrane), and thus conserves the redox energy in a proton gradient.</text>
</comment>
<comment type="catalytic activity">
    <reaction evidence="1">
        <text>a quinone + NADH + 5 H(+)(in) = a quinol + NAD(+) + 4 H(+)(out)</text>
        <dbReference type="Rhea" id="RHEA:57888"/>
        <dbReference type="ChEBI" id="CHEBI:15378"/>
        <dbReference type="ChEBI" id="CHEBI:24646"/>
        <dbReference type="ChEBI" id="CHEBI:57540"/>
        <dbReference type="ChEBI" id="CHEBI:57945"/>
        <dbReference type="ChEBI" id="CHEBI:132124"/>
    </reaction>
</comment>
<comment type="subunit">
    <text evidence="1">NDH-1 is composed of 14 different subunits. Subunits NuoA, H, J, K, L, M, N constitute the membrane sector of the complex.</text>
</comment>
<comment type="subcellular location">
    <subcellularLocation>
        <location evidence="1">Cell inner membrane</location>
        <topology evidence="1">Multi-pass membrane protein</topology>
    </subcellularLocation>
</comment>
<comment type="similarity">
    <text evidence="1">Belongs to the complex I subunit 2 family.</text>
</comment>
<accession>A6L162</accession>
<dbReference type="EC" id="7.1.1.-" evidence="1"/>
<dbReference type="EMBL" id="CP000139">
    <property type="protein sequence ID" value="ABR39426.1"/>
    <property type="molecule type" value="Genomic_DNA"/>
</dbReference>
<dbReference type="SMR" id="A6L162"/>
<dbReference type="STRING" id="435590.BVU_1750"/>
<dbReference type="PaxDb" id="435590-BVU_1750"/>
<dbReference type="KEGG" id="bvu:BVU_1750"/>
<dbReference type="eggNOG" id="COG1007">
    <property type="taxonomic scope" value="Bacteria"/>
</dbReference>
<dbReference type="HOGENOM" id="CLU_007100_1_3_10"/>
<dbReference type="Proteomes" id="UP000002861">
    <property type="component" value="Chromosome"/>
</dbReference>
<dbReference type="GO" id="GO:0005886">
    <property type="term" value="C:plasma membrane"/>
    <property type="evidence" value="ECO:0007669"/>
    <property type="project" value="UniProtKB-SubCell"/>
</dbReference>
<dbReference type="GO" id="GO:0008137">
    <property type="term" value="F:NADH dehydrogenase (ubiquinone) activity"/>
    <property type="evidence" value="ECO:0007669"/>
    <property type="project" value="InterPro"/>
</dbReference>
<dbReference type="GO" id="GO:0050136">
    <property type="term" value="F:NADH:ubiquinone reductase (non-electrogenic) activity"/>
    <property type="evidence" value="ECO:0007669"/>
    <property type="project" value="UniProtKB-UniRule"/>
</dbReference>
<dbReference type="GO" id="GO:0048038">
    <property type="term" value="F:quinone binding"/>
    <property type="evidence" value="ECO:0007669"/>
    <property type="project" value="UniProtKB-KW"/>
</dbReference>
<dbReference type="GO" id="GO:0042773">
    <property type="term" value="P:ATP synthesis coupled electron transport"/>
    <property type="evidence" value="ECO:0007669"/>
    <property type="project" value="InterPro"/>
</dbReference>
<dbReference type="HAMAP" id="MF_00445">
    <property type="entry name" value="NDH1_NuoN_1"/>
    <property type="match status" value="1"/>
</dbReference>
<dbReference type="InterPro" id="IPR010096">
    <property type="entry name" value="NADH-Q_OxRdtase_suN/2"/>
</dbReference>
<dbReference type="InterPro" id="IPR001750">
    <property type="entry name" value="ND/Mrp_TM"/>
</dbReference>
<dbReference type="NCBIfam" id="TIGR01770">
    <property type="entry name" value="NDH_I_N"/>
    <property type="match status" value="1"/>
</dbReference>
<dbReference type="PANTHER" id="PTHR22773">
    <property type="entry name" value="NADH DEHYDROGENASE"/>
    <property type="match status" value="1"/>
</dbReference>
<dbReference type="Pfam" id="PF00361">
    <property type="entry name" value="Proton_antipo_M"/>
    <property type="match status" value="1"/>
</dbReference>
<name>NUON_PHOV8</name>
<reference key="1">
    <citation type="journal article" date="2007" name="PLoS Biol.">
        <title>Evolution of symbiotic bacteria in the distal human intestine.</title>
        <authorList>
            <person name="Xu J."/>
            <person name="Mahowald M.A."/>
            <person name="Ley R.E."/>
            <person name="Lozupone C.A."/>
            <person name="Hamady M."/>
            <person name="Martens E.C."/>
            <person name="Henrissat B."/>
            <person name="Coutinho P.M."/>
            <person name="Minx P."/>
            <person name="Latreille P."/>
            <person name="Cordum H."/>
            <person name="Van Brunt A."/>
            <person name="Kim K."/>
            <person name="Fulton R.S."/>
            <person name="Fulton L.A."/>
            <person name="Clifton S.W."/>
            <person name="Wilson R.K."/>
            <person name="Knight R.D."/>
            <person name="Gordon J.I."/>
        </authorList>
    </citation>
    <scope>NUCLEOTIDE SEQUENCE [LARGE SCALE GENOMIC DNA]</scope>
    <source>
        <strain>ATCC 8482 / DSM 1447 / JCM 5826 / CCUG 4940 / NBRC 14291 / NCTC 11154</strain>
    </source>
</reference>
<organism>
    <name type="scientific">Phocaeicola vulgatus (strain ATCC 8482 / DSM 1447 / JCM 5826 / CCUG 4940 / NBRC 14291 / NCTC 11154)</name>
    <name type="common">Bacteroides vulgatus</name>
    <dbReference type="NCBI Taxonomy" id="435590"/>
    <lineage>
        <taxon>Bacteria</taxon>
        <taxon>Pseudomonadati</taxon>
        <taxon>Bacteroidota</taxon>
        <taxon>Bacteroidia</taxon>
        <taxon>Bacteroidales</taxon>
        <taxon>Bacteroidaceae</taxon>
        <taxon>Phocaeicola</taxon>
    </lineage>
</organism>
<keyword id="KW-0997">Cell inner membrane</keyword>
<keyword id="KW-1003">Cell membrane</keyword>
<keyword id="KW-0472">Membrane</keyword>
<keyword id="KW-0520">NAD</keyword>
<keyword id="KW-0874">Quinone</keyword>
<keyword id="KW-1278">Translocase</keyword>
<keyword id="KW-0812">Transmembrane</keyword>
<keyword id="KW-1133">Transmembrane helix</keyword>
<keyword id="KW-0813">Transport</keyword>
<protein>
    <recommendedName>
        <fullName evidence="1">NADH-quinone oxidoreductase subunit N</fullName>
        <ecNumber evidence="1">7.1.1.-</ecNumber>
    </recommendedName>
    <alternativeName>
        <fullName evidence="1">NADH dehydrogenase I subunit N</fullName>
    </alternativeName>
    <alternativeName>
        <fullName evidence="1">NDH-1 subunit N</fullName>
    </alternativeName>
</protein>
<sequence>MDITAILHMHAELSLTAVFILMFLLDLFLPATQRHWLRPMACILLTIQLLANLWPEEVTLFGGMYHSTPMASVLKSILTIGTILVFLQADTWLKREDTRHKQGEFYILTLSTLLGMYFMVSAGHFLLFFLGLELATVPMACLVAFDKYKGHSAEAGAKFILSALFSSGIFLYGISMIYGTAGTLYFEDIPAGLTGTPLQVLALVFFFSGLAFKLSLVPFHLWTADTYQGAPTTVSAYLSVISKGAAAFALMIILMKVFGPMTEQWSEILCIIIVATITIANLFAIRQNNLKRFMAFSSISQAGYIMLAVLAGTPQDMASLVYYIVVYIAANLAVFGVISTIEQHTHGKIEREDYNGLYKTNPKLTMVMTLALFSLAGIPPFAGFFSKFFVFMAAFHSGYYLIVFIALVNTIISLYYYLLIVKAMFITPNEDPIGNFRTATPMRISLLVCVAGIFVLGIISGVYQLLSDTAIL</sequence>
<gene>
    <name evidence="1" type="primary">nuoN</name>
    <name type="ordered locus">BVU_1750</name>
</gene>
<feature type="chain" id="PRO_0000391106" description="NADH-quinone oxidoreductase subunit N">
    <location>
        <begin position="1"/>
        <end position="472"/>
    </location>
</feature>
<feature type="transmembrane region" description="Helical" evidence="1">
    <location>
        <begin position="11"/>
        <end position="31"/>
    </location>
</feature>
<feature type="transmembrane region" description="Helical" evidence="1">
    <location>
        <begin position="43"/>
        <end position="63"/>
    </location>
</feature>
<feature type="transmembrane region" description="Helical" evidence="1">
    <location>
        <begin position="67"/>
        <end position="87"/>
    </location>
</feature>
<feature type="transmembrane region" description="Helical" evidence="1">
    <location>
        <begin position="103"/>
        <end position="123"/>
    </location>
</feature>
<feature type="transmembrane region" description="Helical" evidence="1">
    <location>
        <begin position="125"/>
        <end position="145"/>
    </location>
</feature>
<feature type="transmembrane region" description="Helical" evidence="1">
    <location>
        <begin position="159"/>
        <end position="179"/>
    </location>
</feature>
<feature type="transmembrane region" description="Helical" evidence="1">
    <location>
        <begin position="200"/>
        <end position="220"/>
    </location>
</feature>
<feature type="transmembrane region" description="Helical" evidence="1">
    <location>
        <begin position="234"/>
        <end position="254"/>
    </location>
</feature>
<feature type="transmembrane region" description="Helical" evidence="1">
    <location>
        <begin position="265"/>
        <end position="285"/>
    </location>
</feature>
<feature type="transmembrane region" description="Helical" evidence="1">
    <location>
        <begin position="293"/>
        <end position="313"/>
    </location>
</feature>
<feature type="transmembrane region" description="Helical" evidence="1">
    <location>
        <begin position="318"/>
        <end position="338"/>
    </location>
</feature>
<feature type="transmembrane region" description="Helical" evidence="1">
    <location>
        <begin position="362"/>
        <end position="384"/>
    </location>
</feature>
<feature type="transmembrane region" description="Helical" evidence="1">
    <location>
        <begin position="401"/>
        <end position="421"/>
    </location>
</feature>
<feature type="transmembrane region" description="Helical" evidence="1">
    <location>
        <begin position="446"/>
        <end position="466"/>
    </location>
</feature>
<proteinExistence type="inferred from homology"/>
<evidence type="ECO:0000255" key="1">
    <source>
        <dbReference type="HAMAP-Rule" id="MF_00445"/>
    </source>
</evidence>